<reference key="1">
    <citation type="journal article" date="1998" name="J. Mol. Evol.">
        <title>Actin phylogeny identifies Mesostigma viride as a flagellate ancestor of the land plants.</title>
        <authorList>
            <person name="Bhattacharya D."/>
            <person name="Weber K."/>
            <person name="An S.S."/>
            <person name="Berning-Koch W."/>
        </authorList>
    </citation>
    <scope>NUCLEOTIDE SEQUENCE [MRNA]</scope>
</reference>
<organism>
    <name type="scientific">Coleochaete scutata</name>
    <dbReference type="NCBI Taxonomy" id="3125"/>
    <lineage>
        <taxon>Eukaryota</taxon>
        <taxon>Viridiplantae</taxon>
        <taxon>Streptophyta</taxon>
        <taxon>Coleochaetophyceae</taxon>
        <taxon>Coleochaetales</taxon>
        <taxon>Coleochaetaceae</taxon>
        <taxon>Coleochaete</taxon>
    </lineage>
</organism>
<accession>O65315</accession>
<proteinExistence type="evidence at transcript level"/>
<name>ACT_COLSC</name>
<dbReference type="EC" id="3.6.4.-" evidence="1"/>
<dbReference type="EMBL" id="AF061019">
    <property type="protein sequence ID" value="AAC16054.1"/>
    <property type="molecule type" value="mRNA"/>
</dbReference>
<dbReference type="SMR" id="O65315"/>
<dbReference type="GO" id="GO:0005737">
    <property type="term" value="C:cytoplasm"/>
    <property type="evidence" value="ECO:0007669"/>
    <property type="project" value="UniProtKB-KW"/>
</dbReference>
<dbReference type="GO" id="GO:0005856">
    <property type="term" value="C:cytoskeleton"/>
    <property type="evidence" value="ECO:0007669"/>
    <property type="project" value="UniProtKB-SubCell"/>
</dbReference>
<dbReference type="GO" id="GO:0005524">
    <property type="term" value="F:ATP binding"/>
    <property type="evidence" value="ECO:0007669"/>
    <property type="project" value="UniProtKB-KW"/>
</dbReference>
<dbReference type="GO" id="GO:0016787">
    <property type="term" value="F:hydrolase activity"/>
    <property type="evidence" value="ECO:0007669"/>
    <property type="project" value="UniProtKB-KW"/>
</dbReference>
<dbReference type="CDD" id="cd10224">
    <property type="entry name" value="ASKHA_NBD_actin"/>
    <property type="match status" value="1"/>
</dbReference>
<dbReference type="FunFam" id="3.30.420.40:FF:000131">
    <property type="entry name" value="Actin, alpha skeletal muscle"/>
    <property type="match status" value="1"/>
</dbReference>
<dbReference type="FunFam" id="3.30.420.40:FF:000291">
    <property type="entry name" value="Actin, alpha skeletal muscle"/>
    <property type="match status" value="1"/>
</dbReference>
<dbReference type="FunFam" id="3.90.640.10:FF:000001">
    <property type="entry name" value="Actin, muscle"/>
    <property type="match status" value="1"/>
</dbReference>
<dbReference type="FunFam" id="3.30.420.40:FF:000058">
    <property type="entry name" value="Putative actin-related protein 5"/>
    <property type="match status" value="1"/>
</dbReference>
<dbReference type="Gene3D" id="3.30.420.40">
    <property type="match status" value="2"/>
</dbReference>
<dbReference type="Gene3D" id="3.90.640.10">
    <property type="entry name" value="Actin, Chain A, domain 4"/>
    <property type="match status" value="1"/>
</dbReference>
<dbReference type="InterPro" id="IPR004000">
    <property type="entry name" value="Actin"/>
</dbReference>
<dbReference type="InterPro" id="IPR020902">
    <property type="entry name" value="Actin/actin-like_CS"/>
</dbReference>
<dbReference type="InterPro" id="IPR004001">
    <property type="entry name" value="Actin_CS"/>
</dbReference>
<dbReference type="InterPro" id="IPR043129">
    <property type="entry name" value="ATPase_NBD"/>
</dbReference>
<dbReference type="PANTHER" id="PTHR11937">
    <property type="entry name" value="ACTIN"/>
    <property type="match status" value="1"/>
</dbReference>
<dbReference type="Pfam" id="PF00022">
    <property type="entry name" value="Actin"/>
    <property type="match status" value="1"/>
</dbReference>
<dbReference type="PRINTS" id="PR00190">
    <property type="entry name" value="ACTIN"/>
</dbReference>
<dbReference type="SMART" id="SM00268">
    <property type="entry name" value="ACTIN"/>
    <property type="match status" value="1"/>
</dbReference>
<dbReference type="SUPFAM" id="SSF53067">
    <property type="entry name" value="Actin-like ATPase domain"/>
    <property type="match status" value="2"/>
</dbReference>
<dbReference type="PROSITE" id="PS00406">
    <property type="entry name" value="ACTINS_1"/>
    <property type="match status" value="1"/>
</dbReference>
<dbReference type="PROSITE" id="PS00432">
    <property type="entry name" value="ACTINS_2"/>
    <property type="match status" value="1"/>
</dbReference>
<dbReference type="PROSITE" id="PS01132">
    <property type="entry name" value="ACTINS_ACT_LIKE"/>
    <property type="match status" value="1"/>
</dbReference>
<feature type="chain" id="PRO_0000088912" description="Actin">
    <location>
        <begin position="1"/>
        <end position="377"/>
    </location>
</feature>
<protein>
    <recommendedName>
        <fullName>Actin</fullName>
        <ecNumber evidence="1">3.6.4.-</ecNumber>
    </recommendedName>
</protein>
<sequence>MADGEEVSALVCDNGSGMVKAGFAGDDAPRAVFPSIVGRPRHQGVMVGMGQKDAYVGDEAQSKRGILTLKYPIEHGIVTNWDDMEKIWHHTFYNELRVAPEEHPVLLTEAPLNPKANREKMTQIMFETFSVPAMYVAIQAVLSLYASGRTTGIVLDSGDGVTHTVPIYEGYALPHAILRLDLAGRDLTDYMMKILTERGYAFTTTAEREIVRDIKEKLAYVALDFEQEMQTAQNSSSLEKSYELPDGQVITIGSERFRCPEVLFNPALIGMESAGIHETTYNSIMKCDVDIRKDLYGNIVLSGGTTMFPGIADRMSKEITALAPSSMKIKVVAPPERKYSVWIGGSILASLSTFQQMWIAKSEYDESGPSIVHRKCF</sequence>
<keyword id="KW-0067">ATP-binding</keyword>
<keyword id="KW-0963">Cytoplasm</keyword>
<keyword id="KW-0206">Cytoskeleton</keyword>
<keyword id="KW-0378">Hydrolase</keyword>
<keyword id="KW-0547">Nucleotide-binding</keyword>
<evidence type="ECO:0000250" key="1">
    <source>
        <dbReference type="UniProtKB" id="P68137"/>
    </source>
</evidence>
<evidence type="ECO:0000305" key="2"/>
<comment type="function">
    <text>Actins are highly conserved proteins that are involved in various types of cell motility and are ubiquitously expressed in all eukaryotic cells.</text>
</comment>
<comment type="catalytic activity">
    <reaction evidence="1">
        <text>ATP + H2O = ADP + phosphate + H(+)</text>
        <dbReference type="Rhea" id="RHEA:13065"/>
        <dbReference type="ChEBI" id="CHEBI:15377"/>
        <dbReference type="ChEBI" id="CHEBI:15378"/>
        <dbReference type="ChEBI" id="CHEBI:30616"/>
        <dbReference type="ChEBI" id="CHEBI:43474"/>
        <dbReference type="ChEBI" id="CHEBI:456216"/>
    </reaction>
</comment>
<comment type="subcellular location">
    <subcellularLocation>
        <location>Cytoplasm</location>
        <location>Cytoskeleton</location>
    </subcellularLocation>
</comment>
<comment type="similarity">
    <text evidence="2">Belongs to the actin family.</text>
</comment>